<evidence type="ECO:0000256" key="1">
    <source>
        <dbReference type="SAM" id="MobiDB-lite"/>
    </source>
</evidence>
<evidence type="ECO:0000269" key="2">
    <source>
    </source>
</evidence>
<evidence type="ECO:0000303" key="3">
    <source>
    </source>
</evidence>
<evidence type="ECO:0000305" key="4"/>
<evidence type="ECO:0000305" key="5">
    <source>
    </source>
</evidence>
<gene>
    <name type="ordered locus">At4g31810</name>
    <name type="ORF">F11C18.10</name>
</gene>
<name>HIBC5_ARATH</name>
<protein>
    <recommendedName>
        <fullName evidence="3">Small ribosomal subunit protein mS47</fullName>
    </recommendedName>
    <alternativeName>
        <fullName>3-hydroxyisobutyryl-CoA hydrolase-like protein 2, mitochondrial</fullName>
        <ecNumber>3.1.2.-</ecNumber>
    </alternativeName>
</protein>
<proteinExistence type="evidence at protein level"/>
<accession>Q8RXN4</accession>
<accession>Q9SZ48</accession>
<feature type="transit peptide" description="Mitochondrion" evidence="2">
    <location>
        <begin position="1"/>
        <end position="26"/>
    </location>
</feature>
<feature type="chain" id="PRO_0000392981" description="Small ribosomal subunit protein mS47">
    <location>
        <begin position="27"/>
        <end position="409"/>
    </location>
</feature>
<feature type="region of interest" description="Disordered" evidence="1">
    <location>
        <begin position="388"/>
        <end position="409"/>
    </location>
</feature>
<keyword id="KW-0002">3D-structure</keyword>
<keyword id="KW-0378">Hydrolase</keyword>
<keyword id="KW-0496">Mitochondrion</keyword>
<keyword id="KW-1185">Reference proteome</keyword>
<keyword id="KW-0687">Ribonucleoprotein</keyword>
<keyword id="KW-0689">Ribosomal protein</keyword>
<keyword id="KW-0809">Transit peptide</keyword>
<organism>
    <name type="scientific">Arabidopsis thaliana</name>
    <name type="common">Mouse-ear cress</name>
    <dbReference type="NCBI Taxonomy" id="3702"/>
    <lineage>
        <taxon>Eukaryota</taxon>
        <taxon>Viridiplantae</taxon>
        <taxon>Streptophyta</taxon>
        <taxon>Embryophyta</taxon>
        <taxon>Tracheophyta</taxon>
        <taxon>Spermatophyta</taxon>
        <taxon>Magnoliopsida</taxon>
        <taxon>eudicotyledons</taxon>
        <taxon>Gunneridae</taxon>
        <taxon>Pentapetalae</taxon>
        <taxon>rosids</taxon>
        <taxon>malvids</taxon>
        <taxon>Brassicales</taxon>
        <taxon>Brassicaceae</taxon>
        <taxon>Camelineae</taxon>
        <taxon>Arabidopsis</taxon>
    </lineage>
</organism>
<reference key="1">
    <citation type="journal article" date="1999" name="Nature">
        <title>Sequence and analysis of chromosome 4 of the plant Arabidopsis thaliana.</title>
        <authorList>
            <person name="Mayer K.F.X."/>
            <person name="Schueller C."/>
            <person name="Wambutt R."/>
            <person name="Murphy G."/>
            <person name="Volckaert G."/>
            <person name="Pohl T."/>
            <person name="Duesterhoeft A."/>
            <person name="Stiekema W."/>
            <person name="Entian K.-D."/>
            <person name="Terryn N."/>
            <person name="Harris B."/>
            <person name="Ansorge W."/>
            <person name="Brandt P."/>
            <person name="Grivell L.A."/>
            <person name="Rieger M."/>
            <person name="Weichselgartner M."/>
            <person name="de Simone V."/>
            <person name="Obermaier B."/>
            <person name="Mache R."/>
            <person name="Mueller M."/>
            <person name="Kreis M."/>
            <person name="Delseny M."/>
            <person name="Puigdomenech P."/>
            <person name="Watson M."/>
            <person name="Schmidtheini T."/>
            <person name="Reichert B."/>
            <person name="Portetelle D."/>
            <person name="Perez-Alonso M."/>
            <person name="Boutry M."/>
            <person name="Bancroft I."/>
            <person name="Vos P."/>
            <person name="Hoheisel J."/>
            <person name="Zimmermann W."/>
            <person name="Wedler H."/>
            <person name="Ridley P."/>
            <person name="Langham S.-A."/>
            <person name="McCullagh B."/>
            <person name="Bilham L."/>
            <person name="Robben J."/>
            <person name="van der Schueren J."/>
            <person name="Grymonprez B."/>
            <person name="Chuang Y.-J."/>
            <person name="Vandenbussche F."/>
            <person name="Braeken M."/>
            <person name="Weltjens I."/>
            <person name="Voet M."/>
            <person name="Bastiaens I."/>
            <person name="Aert R."/>
            <person name="Defoor E."/>
            <person name="Weitzenegger T."/>
            <person name="Bothe G."/>
            <person name="Ramsperger U."/>
            <person name="Hilbert H."/>
            <person name="Braun M."/>
            <person name="Holzer E."/>
            <person name="Brandt A."/>
            <person name="Peters S."/>
            <person name="van Staveren M."/>
            <person name="Dirkse W."/>
            <person name="Mooijman P."/>
            <person name="Klein Lankhorst R."/>
            <person name="Rose M."/>
            <person name="Hauf J."/>
            <person name="Koetter P."/>
            <person name="Berneiser S."/>
            <person name="Hempel S."/>
            <person name="Feldpausch M."/>
            <person name="Lamberth S."/>
            <person name="Van den Daele H."/>
            <person name="De Keyser A."/>
            <person name="Buysshaert C."/>
            <person name="Gielen J."/>
            <person name="Villarroel R."/>
            <person name="De Clercq R."/>
            <person name="van Montagu M."/>
            <person name="Rogers J."/>
            <person name="Cronin A."/>
            <person name="Quail M.A."/>
            <person name="Bray-Allen S."/>
            <person name="Clark L."/>
            <person name="Doggett J."/>
            <person name="Hall S."/>
            <person name="Kay M."/>
            <person name="Lennard N."/>
            <person name="McLay K."/>
            <person name="Mayes R."/>
            <person name="Pettett A."/>
            <person name="Rajandream M.A."/>
            <person name="Lyne M."/>
            <person name="Benes V."/>
            <person name="Rechmann S."/>
            <person name="Borkova D."/>
            <person name="Bloecker H."/>
            <person name="Scharfe M."/>
            <person name="Grimm M."/>
            <person name="Loehnert T.-H."/>
            <person name="Dose S."/>
            <person name="de Haan M."/>
            <person name="Maarse A.C."/>
            <person name="Schaefer M."/>
            <person name="Mueller-Auer S."/>
            <person name="Gabel C."/>
            <person name="Fuchs M."/>
            <person name="Fartmann B."/>
            <person name="Granderath K."/>
            <person name="Dauner D."/>
            <person name="Herzl A."/>
            <person name="Neumann S."/>
            <person name="Argiriou A."/>
            <person name="Vitale D."/>
            <person name="Liguori R."/>
            <person name="Piravandi E."/>
            <person name="Massenet O."/>
            <person name="Quigley F."/>
            <person name="Clabauld G."/>
            <person name="Muendlein A."/>
            <person name="Felber R."/>
            <person name="Schnabl S."/>
            <person name="Hiller R."/>
            <person name="Schmidt W."/>
            <person name="Lecharny A."/>
            <person name="Aubourg S."/>
            <person name="Chefdor F."/>
            <person name="Cooke R."/>
            <person name="Berger C."/>
            <person name="Monfort A."/>
            <person name="Casacuberta E."/>
            <person name="Gibbons T."/>
            <person name="Weber N."/>
            <person name="Vandenbol M."/>
            <person name="Bargues M."/>
            <person name="Terol J."/>
            <person name="Torres A."/>
            <person name="Perez-Perez A."/>
            <person name="Purnelle B."/>
            <person name="Bent E."/>
            <person name="Johnson S."/>
            <person name="Tacon D."/>
            <person name="Jesse T."/>
            <person name="Heijnen L."/>
            <person name="Schwarz S."/>
            <person name="Scholler P."/>
            <person name="Heber S."/>
            <person name="Francs P."/>
            <person name="Bielke C."/>
            <person name="Frishman D."/>
            <person name="Haase D."/>
            <person name="Lemcke K."/>
            <person name="Mewes H.-W."/>
            <person name="Stocker S."/>
            <person name="Zaccaria P."/>
            <person name="Bevan M."/>
            <person name="Wilson R.K."/>
            <person name="de la Bastide M."/>
            <person name="Habermann K."/>
            <person name="Parnell L."/>
            <person name="Dedhia N."/>
            <person name="Gnoj L."/>
            <person name="Schutz K."/>
            <person name="Huang E."/>
            <person name="Spiegel L."/>
            <person name="Sekhon M."/>
            <person name="Murray J."/>
            <person name="Sheet P."/>
            <person name="Cordes M."/>
            <person name="Abu-Threideh J."/>
            <person name="Stoneking T."/>
            <person name="Kalicki J."/>
            <person name="Graves T."/>
            <person name="Harmon G."/>
            <person name="Edwards J."/>
            <person name="Latreille P."/>
            <person name="Courtney L."/>
            <person name="Cloud J."/>
            <person name="Abbott A."/>
            <person name="Scott K."/>
            <person name="Johnson D."/>
            <person name="Minx P."/>
            <person name="Bentley D."/>
            <person name="Fulton B."/>
            <person name="Miller N."/>
            <person name="Greco T."/>
            <person name="Kemp K."/>
            <person name="Kramer J."/>
            <person name="Fulton L."/>
            <person name="Mardis E."/>
            <person name="Dante M."/>
            <person name="Pepin K."/>
            <person name="Hillier L.W."/>
            <person name="Nelson J."/>
            <person name="Spieth J."/>
            <person name="Ryan E."/>
            <person name="Andrews S."/>
            <person name="Geisel C."/>
            <person name="Layman D."/>
            <person name="Du H."/>
            <person name="Ali J."/>
            <person name="Berghoff A."/>
            <person name="Jones K."/>
            <person name="Drone K."/>
            <person name="Cotton M."/>
            <person name="Joshu C."/>
            <person name="Antonoiu B."/>
            <person name="Zidanic M."/>
            <person name="Strong C."/>
            <person name="Sun H."/>
            <person name="Lamar B."/>
            <person name="Yordan C."/>
            <person name="Ma P."/>
            <person name="Zhong J."/>
            <person name="Preston R."/>
            <person name="Vil D."/>
            <person name="Shekher M."/>
            <person name="Matero A."/>
            <person name="Shah R."/>
            <person name="Swaby I.K."/>
            <person name="O'Shaughnessy A."/>
            <person name="Rodriguez M."/>
            <person name="Hoffman J."/>
            <person name="Till S."/>
            <person name="Granat S."/>
            <person name="Shohdy N."/>
            <person name="Hasegawa A."/>
            <person name="Hameed A."/>
            <person name="Lodhi M."/>
            <person name="Johnson A."/>
            <person name="Chen E."/>
            <person name="Marra M.A."/>
            <person name="Martienssen R."/>
            <person name="McCombie W.R."/>
        </authorList>
    </citation>
    <scope>NUCLEOTIDE SEQUENCE [LARGE SCALE GENOMIC DNA]</scope>
    <source>
        <strain>cv. Columbia</strain>
    </source>
</reference>
<reference key="2">
    <citation type="journal article" date="2017" name="Plant J.">
        <title>Araport11: a complete reannotation of the Arabidopsis thaliana reference genome.</title>
        <authorList>
            <person name="Cheng C.Y."/>
            <person name="Krishnakumar V."/>
            <person name="Chan A.P."/>
            <person name="Thibaud-Nissen F."/>
            <person name="Schobel S."/>
            <person name="Town C.D."/>
        </authorList>
    </citation>
    <scope>GENOME REANNOTATION</scope>
    <source>
        <strain>cv. Columbia</strain>
    </source>
</reference>
<reference key="3">
    <citation type="journal article" date="2003" name="Science">
        <title>Empirical analysis of transcriptional activity in the Arabidopsis genome.</title>
        <authorList>
            <person name="Yamada K."/>
            <person name="Lim J."/>
            <person name="Dale J.M."/>
            <person name="Chen H."/>
            <person name="Shinn P."/>
            <person name="Palm C.J."/>
            <person name="Southwick A.M."/>
            <person name="Wu H.C."/>
            <person name="Kim C.J."/>
            <person name="Nguyen M."/>
            <person name="Pham P.K."/>
            <person name="Cheuk R.F."/>
            <person name="Karlin-Newmann G."/>
            <person name="Liu S.X."/>
            <person name="Lam B."/>
            <person name="Sakano H."/>
            <person name="Wu T."/>
            <person name="Yu G."/>
            <person name="Miranda M."/>
            <person name="Quach H.L."/>
            <person name="Tripp M."/>
            <person name="Chang C.H."/>
            <person name="Lee J.M."/>
            <person name="Toriumi M.J."/>
            <person name="Chan M.M."/>
            <person name="Tang C.C."/>
            <person name="Onodera C.S."/>
            <person name="Deng J.M."/>
            <person name="Akiyama K."/>
            <person name="Ansari Y."/>
            <person name="Arakawa T."/>
            <person name="Banh J."/>
            <person name="Banno F."/>
            <person name="Bowser L."/>
            <person name="Brooks S.Y."/>
            <person name="Carninci P."/>
            <person name="Chao Q."/>
            <person name="Choy N."/>
            <person name="Enju A."/>
            <person name="Goldsmith A.D."/>
            <person name="Gurjal M."/>
            <person name="Hansen N.F."/>
            <person name="Hayashizaki Y."/>
            <person name="Johnson-Hopson C."/>
            <person name="Hsuan V.W."/>
            <person name="Iida K."/>
            <person name="Karnes M."/>
            <person name="Khan S."/>
            <person name="Koesema E."/>
            <person name="Ishida J."/>
            <person name="Jiang P.X."/>
            <person name="Jones T."/>
            <person name="Kawai J."/>
            <person name="Kamiya A."/>
            <person name="Meyers C."/>
            <person name="Nakajima M."/>
            <person name="Narusaka M."/>
            <person name="Seki M."/>
            <person name="Sakurai T."/>
            <person name="Satou M."/>
            <person name="Tamse R."/>
            <person name="Vaysberg M."/>
            <person name="Wallender E.K."/>
            <person name="Wong C."/>
            <person name="Yamamura Y."/>
            <person name="Yuan S."/>
            <person name="Shinozaki K."/>
            <person name="Davis R.W."/>
            <person name="Theologis A."/>
            <person name="Ecker J.R."/>
        </authorList>
    </citation>
    <scope>NUCLEOTIDE SEQUENCE [LARGE SCALE MRNA]</scope>
    <source>
        <strain>cv. Columbia</strain>
    </source>
</reference>
<reference key="4">
    <citation type="journal article" date="2001" name="J. Biol. Chem.">
        <title>chy1, an Arabidopsis mutant with impaired beta-oxidation, is defective in a peroxisomal beta-hydroxyisobutyryl-CoA hydrolase.</title>
        <authorList>
            <person name="Zolman B.K."/>
            <person name="Monroe-Augustus M."/>
            <person name="Thompson B."/>
            <person name="Hawes J.W."/>
            <person name="Krukenberg K.A."/>
            <person name="Matsuda S.P."/>
            <person name="Bartel B."/>
        </authorList>
    </citation>
    <scope>GENE FAMILY</scope>
</reference>
<reference key="5">
    <citation type="journal article" date="2015" name="J. Exp. Bot.">
        <title>Identification of cleavage sites and substrate proteins for two mitochondrial intermediate peptidases in Arabidopsis thaliana.</title>
        <authorList>
            <person name="Carrie C."/>
            <person name="Venne A.S."/>
            <person name="Zahedi R.P."/>
            <person name="Soll J."/>
        </authorList>
    </citation>
    <scope>IDENTIFICATION BY MASS SPECTROMETRY</scope>
    <scope>CLEAVAGE OF TRANSIT PEPTIDE AFTER PHE-26</scope>
</reference>
<reference key="6">
    <citation type="journal article" date="2023" name="Plant Cell">
        <title>An updated nomenclature for plant ribosomal protein genes.</title>
        <authorList>
            <person name="Scarpin M.R."/>
            <person name="Busche M."/>
            <person name="Martinez R.E."/>
            <person name="Harper L.C."/>
            <person name="Reiser L."/>
            <person name="Szakonyi D."/>
            <person name="Merchante C."/>
            <person name="Lan T."/>
            <person name="Xiong W."/>
            <person name="Mo B."/>
            <person name="Tang G."/>
            <person name="Chen X."/>
            <person name="Bailey-Serres J."/>
            <person name="Browning K.S."/>
            <person name="Brunkard J.O."/>
        </authorList>
    </citation>
    <scope>NOMENCLATURE</scope>
</reference>
<comment type="subunit">
    <text evidence="4">Component of the mitochondrial ribosome small subunit.</text>
</comment>
<comment type="subcellular location">
    <subcellularLocation>
        <location evidence="3 5">Mitochondrion</location>
    </subcellularLocation>
</comment>
<comment type="similarity">
    <text evidence="4">Belongs to the enoyl-CoA hydratase/isomerase family. Mitochondrion-specific ribosomal protein mS47 subfamily.</text>
</comment>
<comment type="sequence caution" evidence="4">
    <conflict type="erroneous gene model prediction">
        <sequence resource="EMBL-CDS" id="CAB40751"/>
    </conflict>
</comment>
<comment type="sequence caution" evidence="4">
    <conflict type="erroneous gene model prediction">
        <sequence resource="EMBL-CDS" id="CAB79899"/>
    </conflict>
</comment>
<sequence>MQTVKALRRVSEPLQWVRSVSYGRRFSALPNYSASDADFEDQVLVEGKAKSRAAILNNPSSLNALSAPMVGRLKRLYESWEENPAISFVLMKGSGKTFCSGADVLSLYHSINEGNTEESKLFFENLYKFVYLQGTYLKPNIAIMDGVTMGCGGGISLPGMFRVATDKTVLAHPEVQIGFHPDAGASYYLSRLPGYLGEYLALTGQKLNGVEMIACGLATHYCLNARLPLIEERIGKLLTDDPAVIEDSLAQYGDLVYPDSSSVLHKIELIDKYFGLDTVEEIIEAMENEAANSCNEWCKKTLKQIKEASPLSLKITLQSIREGRFQTLDQCLTHEYRISICGVSKVVSGDFCEGIRARLVDKDFAPKWDPPRLEDVSKDMVDCYFTPASELDDSDSELKLPTAQREPYF</sequence>
<dbReference type="EC" id="3.1.2.-"/>
<dbReference type="EMBL" id="AL049607">
    <property type="protein sequence ID" value="CAB40751.1"/>
    <property type="status" value="ALT_SEQ"/>
    <property type="molecule type" value="Genomic_DNA"/>
</dbReference>
<dbReference type="EMBL" id="AL161579">
    <property type="protein sequence ID" value="CAB79899.1"/>
    <property type="status" value="ALT_SEQ"/>
    <property type="molecule type" value="Genomic_DNA"/>
</dbReference>
<dbReference type="EMBL" id="CP002687">
    <property type="protein sequence ID" value="AEE85963.1"/>
    <property type="molecule type" value="Genomic_DNA"/>
</dbReference>
<dbReference type="EMBL" id="AY080787">
    <property type="protein sequence ID" value="AAL87270.1"/>
    <property type="molecule type" value="mRNA"/>
</dbReference>
<dbReference type="EMBL" id="AY114019">
    <property type="protein sequence ID" value="AAM45067.1"/>
    <property type="molecule type" value="mRNA"/>
</dbReference>
<dbReference type="PIR" id="T06303">
    <property type="entry name" value="T06303"/>
</dbReference>
<dbReference type="RefSeq" id="NP_194909.2">
    <property type="nucleotide sequence ID" value="NM_119331.6"/>
</dbReference>
<dbReference type="PDB" id="6XYW">
    <property type="method" value="EM"/>
    <property type="resolution" value="3.86 A"/>
    <property type="chains" value="BE=1-409"/>
</dbReference>
<dbReference type="PDBsum" id="6XYW"/>
<dbReference type="EMDB" id="EMD-10654"/>
<dbReference type="SMR" id="Q8RXN4"/>
<dbReference type="FunCoup" id="Q8RXN4">
    <property type="interactions" value="3194"/>
</dbReference>
<dbReference type="IntAct" id="Q8RXN4">
    <property type="interactions" value="1"/>
</dbReference>
<dbReference type="STRING" id="3702.Q8RXN4"/>
<dbReference type="iPTMnet" id="Q8RXN4"/>
<dbReference type="PaxDb" id="3702-AT4G31810.1"/>
<dbReference type="ProteomicsDB" id="230332"/>
<dbReference type="EnsemblPlants" id="AT4G31810.1">
    <property type="protein sequence ID" value="AT4G31810.1"/>
    <property type="gene ID" value="AT4G31810"/>
</dbReference>
<dbReference type="GeneID" id="829310"/>
<dbReference type="Gramene" id="AT4G31810.1">
    <property type="protein sequence ID" value="AT4G31810.1"/>
    <property type="gene ID" value="AT4G31810"/>
</dbReference>
<dbReference type="KEGG" id="ath:AT4G31810"/>
<dbReference type="Araport" id="AT4G31810"/>
<dbReference type="TAIR" id="AT4G31810">
    <property type="gene designation" value="CHY4"/>
</dbReference>
<dbReference type="eggNOG" id="KOG1684">
    <property type="taxonomic scope" value="Eukaryota"/>
</dbReference>
<dbReference type="HOGENOM" id="CLU_009834_22_1_1"/>
<dbReference type="InParanoid" id="Q8RXN4"/>
<dbReference type="OMA" id="EMALYIG"/>
<dbReference type="PhylomeDB" id="Q8RXN4"/>
<dbReference type="BioCyc" id="ARA:AT4G31810-MONOMER"/>
<dbReference type="CD-CODE" id="4299E36E">
    <property type="entry name" value="Nucleolus"/>
</dbReference>
<dbReference type="PRO" id="PR:Q8RXN4"/>
<dbReference type="Proteomes" id="UP000006548">
    <property type="component" value="Chromosome 4"/>
</dbReference>
<dbReference type="ExpressionAtlas" id="Q8RXN4">
    <property type="expression patterns" value="baseline and differential"/>
</dbReference>
<dbReference type="GO" id="GO:0005739">
    <property type="term" value="C:mitochondrion"/>
    <property type="evidence" value="ECO:0007005"/>
    <property type="project" value="TAIR"/>
</dbReference>
<dbReference type="GO" id="GO:1990904">
    <property type="term" value="C:ribonucleoprotein complex"/>
    <property type="evidence" value="ECO:0007669"/>
    <property type="project" value="UniProtKB-KW"/>
</dbReference>
<dbReference type="GO" id="GO:0005840">
    <property type="term" value="C:ribosome"/>
    <property type="evidence" value="ECO:0007669"/>
    <property type="project" value="UniProtKB-KW"/>
</dbReference>
<dbReference type="GO" id="GO:0003860">
    <property type="term" value="F:3-hydroxyisobutyryl-CoA hydrolase activity"/>
    <property type="evidence" value="ECO:0007669"/>
    <property type="project" value="InterPro"/>
</dbReference>
<dbReference type="CDD" id="cd06558">
    <property type="entry name" value="crotonase-like"/>
    <property type="match status" value="1"/>
</dbReference>
<dbReference type="FunFam" id="3.90.226.10:FF:000027">
    <property type="entry name" value="Probable 3-hydroxyisobutyryl-CoA hydrolase 2"/>
    <property type="match status" value="1"/>
</dbReference>
<dbReference type="Gene3D" id="3.90.226.10">
    <property type="entry name" value="2-enoyl-CoA Hydratase, Chain A, domain 1"/>
    <property type="match status" value="1"/>
</dbReference>
<dbReference type="InterPro" id="IPR029045">
    <property type="entry name" value="ClpP/crotonase-like_dom_sf"/>
</dbReference>
<dbReference type="InterPro" id="IPR045004">
    <property type="entry name" value="ECH_dom"/>
</dbReference>
<dbReference type="InterPro" id="IPR032259">
    <property type="entry name" value="HIBYL-CoA-H"/>
</dbReference>
<dbReference type="NCBIfam" id="NF004127">
    <property type="entry name" value="PRK05617.1"/>
    <property type="match status" value="1"/>
</dbReference>
<dbReference type="PANTHER" id="PTHR43176">
    <property type="entry name" value="3-HYDROXYISOBUTYRYL-COA HYDROLASE-RELATED"/>
    <property type="match status" value="1"/>
</dbReference>
<dbReference type="PANTHER" id="PTHR43176:SF14">
    <property type="entry name" value="SMALL RIBOSOMAL SUBUNIT PROTEIN MS47"/>
    <property type="match status" value="1"/>
</dbReference>
<dbReference type="Pfam" id="PF16113">
    <property type="entry name" value="ECH_2"/>
    <property type="match status" value="1"/>
</dbReference>
<dbReference type="SUPFAM" id="SSF52096">
    <property type="entry name" value="ClpP/crotonase"/>
    <property type="match status" value="1"/>
</dbReference>